<comment type="function">
    <text evidence="1">Involved in the gluconeogenesis. Catalyzes stereospecifically the conversion of dihydroxyacetone phosphate (DHAP) to D-glyceraldehyde-3-phosphate (G3P).</text>
</comment>
<comment type="catalytic activity">
    <reaction evidence="1">
        <text>D-glyceraldehyde 3-phosphate = dihydroxyacetone phosphate</text>
        <dbReference type="Rhea" id="RHEA:18585"/>
        <dbReference type="ChEBI" id="CHEBI:57642"/>
        <dbReference type="ChEBI" id="CHEBI:59776"/>
        <dbReference type="EC" id="5.3.1.1"/>
    </reaction>
</comment>
<comment type="pathway">
    <text evidence="1">Carbohydrate biosynthesis; gluconeogenesis.</text>
</comment>
<comment type="pathway">
    <text evidence="1">Carbohydrate degradation; glycolysis; D-glyceraldehyde 3-phosphate from glycerone phosphate: step 1/1.</text>
</comment>
<comment type="subunit">
    <text evidence="1">Homodimer.</text>
</comment>
<comment type="subcellular location">
    <subcellularLocation>
        <location evidence="1">Cytoplasm</location>
    </subcellularLocation>
</comment>
<comment type="similarity">
    <text evidence="1">Belongs to the triosephosphate isomerase family.</text>
</comment>
<feature type="chain" id="PRO_0000307567" description="Triosephosphate isomerase">
    <location>
        <begin position="1"/>
        <end position="253"/>
    </location>
</feature>
<feature type="active site" description="Electrophile" evidence="1">
    <location>
        <position position="97"/>
    </location>
</feature>
<feature type="active site" description="Proton acceptor" evidence="1">
    <location>
        <position position="169"/>
    </location>
</feature>
<feature type="binding site" evidence="1">
    <location>
        <begin position="9"/>
        <end position="11"/>
    </location>
    <ligand>
        <name>substrate</name>
    </ligand>
</feature>
<feature type="binding site" evidence="1">
    <location>
        <position position="175"/>
    </location>
    <ligand>
        <name>substrate</name>
    </ligand>
</feature>
<feature type="binding site" evidence="1">
    <location>
        <position position="215"/>
    </location>
    <ligand>
        <name>substrate</name>
    </ligand>
</feature>
<feature type="binding site" evidence="1">
    <location>
        <begin position="236"/>
        <end position="237"/>
    </location>
    <ligand>
        <name>substrate</name>
    </ligand>
</feature>
<protein>
    <recommendedName>
        <fullName evidence="1">Triosephosphate isomerase</fullName>
        <shortName evidence="1">TIM</shortName>
        <shortName evidence="1">TPI</shortName>
        <ecNumber evidence="1">5.3.1.1</ecNumber>
    </recommendedName>
    <alternativeName>
        <fullName evidence="1">Triose-phosphate isomerase</fullName>
    </alternativeName>
</protein>
<name>TPIS_STAA8</name>
<keyword id="KW-0963">Cytoplasm</keyword>
<keyword id="KW-0312">Gluconeogenesis</keyword>
<keyword id="KW-0324">Glycolysis</keyword>
<keyword id="KW-0413">Isomerase</keyword>
<keyword id="KW-1185">Reference proteome</keyword>
<organism>
    <name type="scientific">Staphylococcus aureus (strain NCTC 8325 / PS 47)</name>
    <dbReference type="NCBI Taxonomy" id="93061"/>
    <lineage>
        <taxon>Bacteria</taxon>
        <taxon>Bacillati</taxon>
        <taxon>Bacillota</taxon>
        <taxon>Bacilli</taxon>
        <taxon>Bacillales</taxon>
        <taxon>Staphylococcaceae</taxon>
        <taxon>Staphylococcus</taxon>
    </lineage>
</organism>
<reference key="1">
    <citation type="book" date="2006" name="Gram positive pathogens, 2nd edition">
        <title>The Staphylococcus aureus NCTC 8325 genome.</title>
        <editorList>
            <person name="Fischetti V."/>
            <person name="Novick R."/>
            <person name="Ferretti J."/>
            <person name="Portnoy D."/>
            <person name="Rood J."/>
        </editorList>
        <authorList>
            <person name="Gillaspy A.F."/>
            <person name="Worrell V."/>
            <person name="Orvis J."/>
            <person name="Roe B.A."/>
            <person name="Dyer D.W."/>
            <person name="Iandolo J.J."/>
        </authorList>
    </citation>
    <scope>NUCLEOTIDE SEQUENCE [LARGE SCALE GENOMIC DNA]</scope>
    <source>
        <strain>NCTC 8325 / PS 47</strain>
    </source>
</reference>
<dbReference type="EC" id="5.3.1.1" evidence="1"/>
<dbReference type="EMBL" id="CP000253">
    <property type="protein sequence ID" value="ABD29925.1"/>
    <property type="molecule type" value="Genomic_DNA"/>
</dbReference>
<dbReference type="RefSeq" id="WP_001260103.1">
    <property type="nucleotide sequence ID" value="NZ_LS483365.1"/>
</dbReference>
<dbReference type="RefSeq" id="YP_499353.1">
    <property type="nucleotide sequence ID" value="NC_007795.1"/>
</dbReference>
<dbReference type="SMR" id="Q2G030"/>
<dbReference type="STRING" id="93061.SAOUHSC_00797"/>
<dbReference type="PaxDb" id="1280-SAXN108_0842"/>
<dbReference type="GeneID" id="3919360"/>
<dbReference type="KEGG" id="sao:SAOUHSC_00797"/>
<dbReference type="PATRIC" id="fig|93061.5.peg.721"/>
<dbReference type="eggNOG" id="COG0149">
    <property type="taxonomic scope" value="Bacteria"/>
</dbReference>
<dbReference type="HOGENOM" id="CLU_024251_2_3_9"/>
<dbReference type="OrthoDB" id="9809429at2"/>
<dbReference type="UniPathway" id="UPA00109">
    <property type="reaction ID" value="UER00189"/>
</dbReference>
<dbReference type="UniPathway" id="UPA00138"/>
<dbReference type="Proteomes" id="UP000008816">
    <property type="component" value="Chromosome"/>
</dbReference>
<dbReference type="GO" id="GO:0005829">
    <property type="term" value="C:cytosol"/>
    <property type="evidence" value="ECO:0000318"/>
    <property type="project" value="GO_Central"/>
</dbReference>
<dbReference type="GO" id="GO:0004807">
    <property type="term" value="F:triose-phosphate isomerase activity"/>
    <property type="evidence" value="ECO:0000318"/>
    <property type="project" value="GO_Central"/>
</dbReference>
<dbReference type="GO" id="GO:0006094">
    <property type="term" value="P:gluconeogenesis"/>
    <property type="evidence" value="ECO:0000318"/>
    <property type="project" value="GO_Central"/>
</dbReference>
<dbReference type="GO" id="GO:0046166">
    <property type="term" value="P:glyceraldehyde-3-phosphate biosynthetic process"/>
    <property type="evidence" value="ECO:0000318"/>
    <property type="project" value="GO_Central"/>
</dbReference>
<dbReference type="GO" id="GO:0019563">
    <property type="term" value="P:glycerol catabolic process"/>
    <property type="evidence" value="ECO:0000318"/>
    <property type="project" value="GO_Central"/>
</dbReference>
<dbReference type="GO" id="GO:0006096">
    <property type="term" value="P:glycolytic process"/>
    <property type="evidence" value="ECO:0000318"/>
    <property type="project" value="GO_Central"/>
</dbReference>
<dbReference type="CDD" id="cd00311">
    <property type="entry name" value="TIM"/>
    <property type="match status" value="1"/>
</dbReference>
<dbReference type="FunFam" id="3.20.20.70:FF:000016">
    <property type="entry name" value="Triosephosphate isomerase"/>
    <property type="match status" value="1"/>
</dbReference>
<dbReference type="Gene3D" id="3.20.20.70">
    <property type="entry name" value="Aldolase class I"/>
    <property type="match status" value="1"/>
</dbReference>
<dbReference type="HAMAP" id="MF_00147_B">
    <property type="entry name" value="TIM_B"/>
    <property type="match status" value="1"/>
</dbReference>
<dbReference type="InterPro" id="IPR013785">
    <property type="entry name" value="Aldolase_TIM"/>
</dbReference>
<dbReference type="InterPro" id="IPR035990">
    <property type="entry name" value="TIM_sf"/>
</dbReference>
<dbReference type="InterPro" id="IPR022896">
    <property type="entry name" value="TrioseP_Isoase_bac/euk"/>
</dbReference>
<dbReference type="InterPro" id="IPR000652">
    <property type="entry name" value="Triosephosphate_isomerase"/>
</dbReference>
<dbReference type="InterPro" id="IPR020861">
    <property type="entry name" value="Triosephosphate_isomerase_AS"/>
</dbReference>
<dbReference type="NCBIfam" id="TIGR00419">
    <property type="entry name" value="tim"/>
    <property type="match status" value="1"/>
</dbReference>
<dbReference type="PANTHER" id="PTHR21139">
    <property type="entry name" value="TRIOSEPHOSPHATE ISOMERASE"/>
    <property type="match status" value="1"/>
</dbReference>
<dbReference type="PANTHER" id="PTHR21139:SF42">
    <property type="entry name" value="TRIOSEPHOSPHATE ISOMERASE"/>
    <property type="match status" value="1"/>
</dbReference>
<dbReference type="Pfam" id="PF00121">
    <property type="entry name" value="TIM"/>
    <property type="match status" value="1"/>
</dbReference>
<dbReference type="SUPFAM" id="SSF51351">
    <property type="entry name" value="Triosephosphate isomerase (TIM)"/>
    <property type="match status" value="1"/>
</dbReference>
<dbReference type="PROSITE" id="PS00171">
    <property type="entry name" value="TIM_1"/>
    <property type="match status" value="1"/>
</dbReference>
<dbReference type="PROSITE" id="PS51440">
    <property type="entry name" value="TIM_2"/>
    <property type="match status" value="1"/>
</dbReference>
<gene>
    <name evidence="1" type="primary">tpiA</name>
    <name type="ordered locus">SAOUHSC_00797</name>
</gene>
<sequence>MRTPIIAGNWKMNKTVQEAKDFVNTLPTLPDSKEVESVICAPAIQLDALTTAVKEGKAQGLEIGAQNTYFEDNGAFTGETSPVALADLGVKYVVIGHSERRELFHETDEEINKKAHAIFKHGMTPIICVGETDEERESGKANDVVGEQVKKAVAGLSEDQLKSVVIAYEPIWAIGTGKSSTSEDANEMCAFVRQTIADLSSKEVSEATRIQYGGSVKPNNIKEYMAQTDIDGALVGGASLKVEDFVQLLEGAK</sequence>
<accession>Q2G030</accession>
<evidence type="ECO:0000255" key="1">
    <source>
        <dbReference type="HAMAP-Rule" id="MF_00147"/>
    </source>
</evidence>
<proteinExistence type="inferred from homology"/>